<feature type="chain" id="PRO_0000413327" description="Bifunctional methylenetetrahydrofolate dehydrogenase/cyclohydrolase 2, mitochondrial">
    <location>
        <begin position="1"/>
        <end position="347"/>
    </location>
</feature>
<feature type="binding site" evidence="2">
    <location>
        <begin position="98"/>
        <end position="102"/>
    </location>
    <ligand>
        <name>substrate</name>
    </ligand>
</feature>
<feature type="binding site" evidence="2">
    <location>
        <begin position="145"/>
        <end position="147"/>
    </location>
    <ligand>
        <name>substrate</name>
    </ligand>
</feature>
<feature type="binding site" evidence="2">
    <location>
        <begin position="214"/>
        <end position="216"/>
    </location>
    <ligand>
        <name>NAD(+)</name>
        <dbReference type="ChEBI" id="CHEBI:57540"/>
    </ligand>
</feature>
<feature type="binding site" evidence="2">
    <location>
        <position position="247"/>
    </location>
    <ligand>
        <name>NAD(+)</name>
        <dbReference type="ChEBI" id="CHEBI:57540"/>
    </ligand>
</feature>
<feature type="binding site" evidence="2">
    <location>
        <begin position="323"/>
        <end position="327"/>
    </location>
    <ligand>
        <name>substrate</name>
    </ligand>
</feature>
<gene>
    <name evidence="1" type="primary">MTHFD2L</name>
</gene>
<reference key="1">
    <citation type="submission" date="2009-03" db="EMBL/GenBank/DDBJ databases">
        <authorList>
            <person name="Warren W."/>
            <person name="Ye L."/>
            <person name="Minx P."/>
            <person name="Worley K."/>
            <person name="Gibbs R."/>
            <person name="Wilson R.K."/>
        </authorList>
    </citation>
    <scope>NUCLEOTIDE SEQUENCE [LARGE SCALE GENOMIC DNA]</scope>
</reference>
<dbReference type="EC" id="1.5.1.15" evidence="1"/>
<dbReference type="EC" id="1.5.1.5" evidence="1"/>
<dbReference type="EC" id="3.5.4.9" evidence="1"/>
<dbReference type="EMBL" id="ACFV01093585">
    <property type="status" value="NOT_ANNOTATED_CDS"/>
    <property type="molecule type" value="Genomic_DNA"/>
</dbReference>
<dbReference type="EMBL" id="ACFV01093586">
    <property type="status" value="NOT_ANNOTATED_CDS"/>
    <property type="molecule type" value="Genomic_DNA"/>
</dbReference>
<dbReference type="EMBL" id="ACFV01093587">
    <property type="status" value="NOT_ANNOTATED_CDS"/>
    <property type="molecule type" value="Genomic_DNA"/>
</dbReference>
<dbReference type="EMBL" id="ACFV01093588">
    <property type="status" value="NOT_ANNOTATED_CDS"/>
    <property type="molecule type" value="Genomic_DNA"/>
</dbReference>
<dbReference type="RefSeq" id="XP_002745776.3">
    <property type="nucleotide sequence ID" value="XM_002745730.6"/>
</dbReference>
<dbReference type="SMR" id="F6ZFR0"/>
<dbReference type="FunCoup" id="F6ZFR0">
    <property type="interactions" value="1346"/>
</dbReference>
<dbReference type="STRING" id="9483.ENSCJAP00000073826"/>
<dbReference type="Ensembl" id="ENSCJAT00000093762.2">
    <property type="protein sequence ID" value="ENSCJAP00000073826.1"/>
    <property type="gene ID" value="ENSCJAG00000013883.6"/>
</dbReference>
<dbReference type="GeneID" id="100389511"/>
<dbReference type="KEGG" id="cjc:100389511"/>
<dbReference type="CTD" id="441024"/>
<dbReference type="eggNOG" id="KOG0089">
    <property type="taxonomic scope" value="Eukaryota"/>
</dbReference>
<dbReference type="GeneTree" id="ENSGT00940000160901"/>
<dbReference type="HOGENOM" id="CLU_034045_0_1_1"/>
<dbReference type="InParanoid" id="F6ZFR0"/>
<dbReference type="OMA" id="YGCMKML"/>
<dbReference type="OrthoDB" id="5126881at2759"/>
<dbReference type="TreeFam" id="TF323998"/>
<dbReference type="UniPathway" id="UPA00193"/>
<dbReference type="Proteomes" id="UP000008225">
    <property type="component" value="Chromosome 3"/>
</dbReference>
<dbReference type="Bgee" id="ENSCJAG00000013883">
    <property type="expression patterns" value="Expressed in liver and 6 other cell types or tissues"/>
</dbReference>
<dbReference type="GO" id="GO:0005743">
    <property type="term" value="C:mitochondrial inner membrane"/>
    <property type="evidence" value="ECO:0007669"/>
    <property type="project" value="UniProtKB-SubCell"/>
</dbReference>
<dbReference type="GO" id="GO:0004477">
    <property type="term" value="F:methenyltetrahydrofolate cyclohydrolase activity"/>
    <property type="evidence" value="ECO:0000250"/>
    <property type="project" value="UniProtKB"/>
</dbReference>
<dbReference type="GO" id="GO:0004487">
    <property type="term" value="F:methylenetetrahydrofolate dehydrogenase (NAD+) activity"/>
    <property type="evidence" value="ECO:0000250"/>
    <property type="project" value="UniProtKB"/>
</dbReference>
<dbReference type="GO" id="GO:0004488">
    <property type="term" value="F:methylenetetrahydrofolate dehydrogenase (NADP+) activity"/>
    <property type="evidence" value="ECO:0000250"/>
    <property type="project" value="UniProtKB"/>
</dbReference>
<dbReference type="GO" id="GO:0000105">
    <property type="term" value="P:L-histidine biosynthetic process"/>
    <property type="evidence" value="ECO:0007669"/>
    <property type="project" value="UniProtKB-KW"/>
</dbReference>
<dbReference type="GO" id="GO:0009086">
    <property type="term" value="P:methionine biosynthetic process"/>
    <property type="evidence" value="ECO:0007669"/>
    <property type="project" value="UniProtKB-KW"/>
</dbReference>
<dbReference type="GO" id="GO:0006164">
    <property type="term" value="P:purine nucleotide biosynthetic process"/>
    <property type="evidence" value="ECO:0007669"/>
    <property type="project" value="UniProtKB-KW"/>
</dbReference>
<dbReference type="GO" id="GO:0035999">
    <property type="term" value="P:tetrahydrofolate interconversion"/>
    <property type="evidence" value="ECO:0000250"/>
    <property type="project" value="UniProtKB"/>
</dbReference>
<dbReference type="CDD" id="cd01080">
    <property type="entry name" value="NAD_bind_m-THF_DH_Cyclohyd"/>
    <property type="match status" value="1"/>
</dbReference>
<dbReference type="FunFam" id="3.40.50.10860:FF:000001">
    <property type="entry name" value="Bifunctional protein FolD"/>
    <property type="match status" value="1"/>
</dbReference>
<dbReference type="FunFam" id="3.40.50.720:FF:000070">
    <property type="entry name" value="probable bifunctional methylenetetrahydrofolate dehydrogenase/cyclohydrolase 2"/>
    <property type="match status" value="1"/>
</dbReference>
<dbReference type="Gene3D" id="3.40.50.10860">
    <property type="entry name" value="Leucine Dehydrogenase, chain A, domain 1"/>
    <property type="match status" value="1"/>
</dbReference>
<dbReference type="Gene3D" id="3.40.50.720">
    <property type="entry name" value="NAD(P)-binding Rossmann-like Domain"/>
    <property type="match status" value="1"/>
</dbReference>
<dbReference type="HAMAP" id="MF_01576">
    <property type="entry name" value="THF_DHG_CYH"/>
    <property type="match status" value="1"/>
</dbReference>
<dbReference type="InterPro" id="IPR046346">
    <property type="entry name" value="Aminoacid_DH-like_N_sf"/>
</dbReference>
<dbReference type="InterPro" id="IPR036291">
    <property type="entry name" value="NAD(P)-bd_dom_sf"/>
</dbReference>
<dbReference type="InterPro" id="IPR000672">
    <property type="entry name" value="THF_DH/CycHdrlase"/>
</dbReference>
<dbReference type="InterPro" id="IPR020630">
    <property type="entry name" value="THF_DH/CycHdrlase_cat_dom"/>
</dbReference>
<dbReference type="InterPro" id="IPR020867">
    <property type="entry name" value="THF_DH/CycHdrlase_CS"/>
</dbReference>
<dbReference type="InterPro" id="IPR020631">
    <property type="entry name" value="THF_DH/CycHdrlase_NAD-bd_dom"/>
</dbReference>
<dbReference type="PANTHER" id="PTHR48099:SF7">
    <property type="entry name" value="BIFUNCTIONAL METHYLENETETRAHYDROFOLATE DEHYDROGENASE_CYCLOHYDROLASE 2, MITOCHONDRIAL"/>
    <property type="match status" value="1"/>
</dbReference>
<dbReference type="PANTHER" id="PTHR48099">
    <property type="entry name" value="C-1-TETRAHYDROFOLATE SYNTHASE, CYTOPLASMIC-RELATED"/>
    <property type="match status" value="1"/>
</dbReference>
<dbReference type="Pfam" id="PF00763">
    <property type="entry name" value="THF_DHG_CYH"/>
    <property type="match status" value="1"/>
</dbReference>
<dbReference type="Pfam" id="PF02882">
    <property type="entry name" value="THF_DHG_CYH_C"/>
    <property type="match status" value="1"/>
</dbReference>
<dbReference type="PRINTS" id="PR00085">
    <property type="entry name" value="THFDHDRGNASE"/>
</dbReference>
<dbReference type="SUPFAM" id="SSF53223">
    <property type="entry name" value="Aminoacid dehydrogenase-like, N-terminal domain"/>
    <property type="match status" value="1"/>
</dbReference>
<dbReference type="SUPFAM" id="SSF51735">
    <property type="entry name" value="NAD(P)-binding Rossmann-fold domains"/>
    <property type="match status" value="1"/>
</dbReference>
<proteinExistence type="inferred from homology"/>
<evidence type="ECO:0000250" key="1">
    <source>
        <dbReference type="UniProtKB" id="D3ZUA0"/>
    </source>
</evidence>
<evidence type="ECO:0000250" key="2">
    <source>
        <dbReference type="UniProtKB" id="P13995"/>
    </source>
</evidence>
<evidence type="ECO:0000305" key="3"/>
<accession>F6ZFR0</accession>
<sequence length="347" mass="37342">MTVPARGFLLLRGRLGRVPALGRSTAPPVRAPGGPRSAFRGFRSSGVRHEAVIISGTEMAKHIQKEIKQGVESWISLGNRRPHLSIILVGDNPASHTYVRNKIRAASAVGICSELILKPKDVSQEELLDITDQLNMDPRVSGILVQLPLPDHVDERMICNGIAPEKDVDGFHIINIGRLCLDQHSLIPATASAVWEIITRTGIQTFGKNVVVAGRSKNVGMPIAMLLHTDGEHERPGGDATVTIAHRYTPKEQLKTHTQLADVIIVAAGIPKLITSDMVKEGAAVIDVGINYVHDPVTGKTKLVGDVDFEAVKKKAGFITPVPGGVGPMTVAMLLKNTLLAAKKIIY</sequence>
<protein>
    <recommendedName>
        <fullName evidence="1">Bifunctional methylenetetrahydrofolate dehydrogenase/cyclohydrolase 2, mitochondrial</fullName>
    </recommendedName>
    <alternativeName>
        <fullName evidence="1">NADP-dependent methylenetetrahydrofolate dehydrogenase 2-like protein</fullName>
        <shortName evidence="1">MTHFD2-like</shortName>
    </alternativeName>
    <domain>
        <recommendedName>
            <fullName evidence="1">NAD-dependent methylenetetrahydrofolate dehydrogenase</fullName>
            <ecNumber evidence="1">1.5.1.15</ecNumber>
            <ecNumber evidence="1">1.5.1.5</ecNumber>
        </recommendedName>
    </domain>
    <domain>
        <recommendedName>
            <fullName evidence="1">Methenyltetrahydrofolate cyclohydrolase</fullName>
            <ecNumber evidence="1">3.5.4.9</ecNumber>
        </recommendedName>
    </domain>
</protein>
<organism>
    <name type="scientific">Callithrix jacchus</name>
    <name type="common">White-tufted-ear marmoset</name>
    <dbReference type="NCBI Taxonomy" id="9483"/>
    <lineage>
        <taxon>Eukaryota</taxon>
        <taxon>Metazoa</taxon>
        <taxon>Chordata</taxon>
        <taxon>Craniata</taxon>
        <taxon>Vertebrata</taxon>
        <taxon>Euteleostomi</taxon>
        <taxon>Mammalia</taxon>
        <taxon>Eutheria</taxon>
        <taxon>Euarchontoglires</taxon>
        <taxon>Primates</taxon>
        <taxon>Haplorrhini</taxon>
        <taxon>Platyrrhini</taxon>
        <taxon>Cebidae</taxon>
        <taxon>Callitrichinae</taxon>
        <taxon>Callithrix</taxon>
        <taxon>Callithrix</taxon>
    </lineage>
</organism>
<comment type="function">
    <text evidence="1">Bifunctional mitochondrial folate-interconverting enzyme that has both NAD/NADP-dependent methylenetetrahydrofolate dehydrogenase and methenyltetrahydrofolate cyclohydrolase activities.</text>
</comment>
<comment type="catalytic activity">
    <reaction evidence="1">
        <text>(6R)-5,10-methylene-5,6,7,8-tetrahydrofolate + NAD(+) = (6R)-5,10-methenyltetrahydrofolate + NADH</text>
        <dbReference type="Rhea" id="RHEA:22892"/>
        <dbReference type="ChEBI" id="CHEBI:15636"/>
        <dbReference type="ChEBI" id="CHEBI:57455"/>
        <dbReference type="ChEBI" id="CHEBI:57540"/>
        <dbReference type="ChEBI" id="CHEBI:57945"/>
        <dbReference type="EC" id="1.5.1.15"/>
    </reaction>
</comment>
<comment type="catalytic activity">
    <reaction evidence="1">
        <text>(6R)-5,10-methenyltetrahydrofolate + H2O = (6R)-10-formyltetrahydrofolate + H(+)</text>
        <dbReference type="Rhea" id="RHEA:23700"/>
        <dbReference type="ChEBI" id="CHEBI:15377"/>
        <dbReference type="ChEBI" id="CHEBI:15378"/>
        <dbReference type="ChEBI" id="CHEBI:57455"/>
        <dbReference type="ChEBI" id="CHEBI:195366"/>
        <dbReference type="EC" id="3.5.4.9"/>
    </reaction>
</comment>
<comment type="catalytic activity">
    <reaction evidence="1">
        <text>(6R)-5,10-methylene-5,6,7,8-tetrahydrofolate + NADP(+) = (6R)-5,10-methenyltetrahydrofolate + NADPH</text>
        <dbReference type="Rhea" id="RHEA:22812"/>
        <dbReference type="ChEBI" id="CHEBI:15636"/>
        <dbReference type="ChEBI" id="CHEBI:57455"/>
        <dbReference type="ChEBI" id="CHEBI:57783"/>
        <dbReference type="ChEBI" id="CHEBI:58349"/>
        <dbReference type="EC" id="1.5.1.5"/>
    </reaction>
</comment>
<comment type="cofactor">
    <cofactor evidence="1">
        <name>Mg(2+)</name>
        <dbReference type="ChEBI" id="CHEBI:18420"/>
    </cofactor>
</comment>
<comment type="pathway">
    <text evidence="1">One-carbon metabolism; tetrahydrofolate interconversion.</text>
</comment>
<comment type="subcellular location">
    <subcellularLocation>
        <location evidence="1">Mitochondrion inner membrane</location>
        <topology evidence="1">Peripheral membrane protein</topology>
        <orientation evidence="1">Matrix side</orientation>
    </subcellularLocation>
</comment>
<comment type="similarity">
    <text evidence="3">Belongs to the tetrahydrofolate dehydrogenase/cyclohydrolase family.</text>
</comment>
<name>MTD2L_CALJA</name>
<keyword id="KW-0028">Amino-acid biosynthesis</keyword>
<keyword id="KW-0368">Histidine biosynthesis</keyword>
<keyword id="KW-0378">Hydrolase</keyword>
<keyword id="KW-0460">Magnesium</keyword>
<keyword id="KW-0472">Membrane</keyword>
<keyword id="KW-0486">Methionine biosynthesis</keyword>
<keyword id="KW-0496">Mitochondrion</keyword>
<keyword id="KW-0999">Mitochondrion inner membrane</keyword>
<keyword id="KW-0511">Multifunctional enzyme</keyword>
<keyword id="KW-0520">NAD</keyword>
<keyword id="KW-0554">One-carbon metabolism</keyword>
<keyword id="KW-0560">Oxidoreductase</keyword>
<keyword id="KW-0658">Purine biosynthesis</keyword>
<keyword id="KW-1185">Reference proteome</keyword>